<feature type="chain" id="PRO_1000091803" description="2-dehydro-3-deoxyphosphooctonate aldolase">
    <location>
        <begin position="1"/>
        <end position="284"/>
    </location>
</feature>
<reference key="1">
    <citation type="journal article" date="2014" name="Stand. Genomic Sci.">
        <title>Complete genome sequence of Burkholderia phymatum STM815(T), a broad host range and efficient nitrogen-fixing symbiont of Mimosa species.</title>
        <authorList>
            <person name="Moulin L."/>
            <person name="Klonowska A."/>
            <person name="Caroline B."/>
            <person name="Booth K."/>
            <person name="Vriezen J.A."/>
            <person name="Melkonian R."/>
            <person name="James E.K."/>
            <person name="Young J.P."/>
            <person name="Bena G."/>
            <person name="Hauser L."/>
            <person name="Land M."/>
            <person name="Kyrpides N."/>
            <person name="Bruce D."/>
            <person name="Chain P."/>
            <person name="Copeland A."/>
            <person name="Pitluck S."/>
            <person name="Woyke T."/>
            <person name="Lizotte-Waniewski M."/>
            <person name="Bristow J."/>
            <person name="Riley M."/>
        </authorList>
    </citation>
    <scope>NUCLEOTIDE SEQUENCE [LARGE SCALE GENOMIC DNA]</scope>
    <source>
        <strain>DSM 17167 / CIP 108236 / LMG 21445 / STM815</strain>
    </source>
</reference>
<accession>B2JIX1</accession>
<name>KDSA_PARP8</name>
<comment type="catalytic activity">
    <reaction evidence="1">
        <text>D-arabinose 5-phosphate + phosphoenolpyruvate + H2O = 3-deoxy-alpha-D-manno-2-octulosonate-8-phosphate + phosphate</text>
        <dbReference type="Rhea" id="RHEA:14053"/>
        <dbReference type="ChEBI" id="CHEBI:15377"/>
        <dbReference type="ChEBI" id="CHEBI:43474"/>
        <dbReference type="ChEBI" id="CHEBI:57693"/>
        <dbReference type="ChEBI" id="CHEBI:58702"/>
        <dbReference type="ChEBI" id="CHEBI:85985"/>
        <dbReference type="EC" id="2.5.1.55"/>
    </reaction>
</comment>
<comment type="pathway">
    <text evidence="1">Carbohydrate biosynthesis; 3-deoxy-D-manno-octulosonate biosynthesis; 3-deoxy-D-manno-octulosonate from D-ribulose 5-phosphate: step 2/3.</text>
</comment>
<comment type="pathway">
    <text evidence="1">Bacterial outer membrane biogenesis; lipopolysaccharide biosynthesis.</text>
</comment>
<comment type="subcellular location">
    <subcellularLocation>
        <location evidence="1">Cytoplasm</location>
    </subcellularLocation>
</comment>
<comment type="similarity">
    <text evidence="1">Belongs to the KdsA family.</text>
</comment>
<protein>
    <recommendedName>
        <fullName evidence="1">2-dehydro-3-deoxyphosphooctonate aldolase</fullName>
        <ecNumber evidence="1">2.5.1.55</ecNumber>
    </recommendedName>
    <alternativeName>
        <fullName evidence="1">3-deoxy-D-manno-octulosonic acid 8-phosphate synthase</fullName>
    </alternativeName>
    <alternativeName>
        <fullName evidence="1">KDO-8-phosphate synthase</fullName>
        <shortName evidence="1">KDO 8-P synthase</shortName>
        <shortName evidence="1">KDOPS</shortName>
    </alternativeName>
    <alternativeName>
        <fullName evidence="1">Phospho-2-dehydro-3-deoxyoctonate aldolase</fullName>
    </alternativeName>
</protein>
<proteinExistence type="inferred from homology"/>
<gene>
    <name evidence="1" type="primary">kdsA</name>
    <name type="ordered locus">Bphy_1440</name>
</gene>
<dbReference type="EC" id="2.5.1.55" evidence="1"/>
<dbReference type="EMBL" id="CP001043">
    <property type="protein sequence ID" value="ACC70622.1"/>
    <property type="molecule type" value="Genomic_DNA"/>
</dbReference>
<dbReference type="RefSeq" id="WP_012400835.1">
    <property type="nucleotide sequence ID" value="NC_010622.1"/>
</dbReference>
<dbReference type="SMR" id="B2JIX1"/>
<dbReference type="STRING" id="391038.Bphy_1440"/>
<dbReference type="KEGG" id="bph:Bphy_1440"/>
<dbReference type="eggNOG" id="COG2877">
    <property type="taxonomic scope" value="Bacteria"/>
</dbReference>
<dbReference type="HOGENOM" id="CLU_036666_0_0_4"/>
<dbReference type="OrthoDB" id="9776934at2"/>
<dbReference type="UniPathway" id="UPA00030"/>
<dbReference type="UniPathway" id="UPA00357">
    <property type="reaction ID" value="UER00474"/>
</dbReference>
<dbReference type="Proteomes" id="UP000001192">
    <property type="component" value="Chromosome 1"/>
</dbReference>
<dbReference type="GO" id="GO:0005737">
    <property type="term" value="C:cytoplasm"/>
    <property type="evidence" value="ECO:0007669"/>
    <property type="project" value="UniProtKB-SubCell"/>
</dbReference>
<dbReference type="GO" id="GO:0008676">
    <property type="term" value="F:3-deoxy-8-phosphooctulonate synthase activity"/>
    <property type="evidence" value="ECO:0007669"/>
    <property type="project" value="UniProtKB-UniRule"/>
</dbReference>
<dbReference type="GO" id="GO:0019294">
    <property type="term" value="P:keto-3-deoxy-D-manno-octulosonic acid biosynthetic process"/>
    <property type="evidence" value="ECO:0007669"/>
    <property type="project" value="UniProtKB-UniRule"/>
</dbReference>
<dbReference type="Gene3D" id="3.20.20.70">
    <property type="entry name" value="Aldolase class I"/>
    <property type="match status" value="1"/>
</dbReference>
<dbReference type="HAMAP" id="MF_00056">
    <property type="entry name" value="KDO8P_synth"/>
    <property type="match status" value="1"/>
</dbReference>
<dbReference type="InterPro" id="IPR013785">
    <property type="entry name" value="Aldolase_TIM"/>
</dbReference>
<dbReference type="InterPro" id="IPR006218">
    <property type="entry name" value="DAHP1/KDSA"/>
</dbReference>
<dbReference type="InterPro" id="IPR006269">
    <property type="entry name" value="KDO8P_synthase"/>
</dbReference>
<dbReference type="NCBIfam" id="TIGR01362">
    <property type="entry name" value="KDO8P_synth"/>
    <property type="match status" value="1"/>
</dbReference>
<dbReference type="NCBIfam" id="NF003543">
    <property type="entry name" value="PRK05198.1"/>
    <property type="match status" value="1"/>
</dbReference>
<dbReference type="PANTHER" id="PTHR21057">
    <property type="entry name" value="PHOSPHO-2-DEHYDRO-3-DEOXYHEPTONATE ALDOLASE"/>
    <property type="match status" value="1"/>
</dbReference>
<dbReference type="Pfam" id="PF00793">
    <property type="entry name" value="DAHP_synth_1"/>
    <property type="match status" value="1"/>
</dbReference>
<dbReference type="SUPFAM" id="SSF51569">
    <property type="entry name" value="Aldolase"/>
    <property type="match status" value="1"/>
</dbReference>
<organism>
    <name type="scientific">Paraburkholderia phymatum (strain DSM 17167 / CIP 108236 / LMG 21445 / STM815)</name>
    <name type="common">Burkholderia phymatum</name>
    <dbReference type="NCBI Taxonomy" id="391038"/>
    <lineage>
        <taxon>Bacteria</taxon>
        <taxon>Pseudomonadati</taxon>
        <taxon>Pseudomonadota</taxon>
        <taxon>Betaproteobacteria</taxon>
        <taxon>Burkholderiales</taxon>
        <taxon>Burkholderiaceae</taxon>
        <taxon>Paraburkholderia</taxon>
    </lineage>
</organism>
<sequence>MKLGDFEIGLDKPFFLIAGTCVVESEQMTIDTAGKLKEICAKLKIPFIYKSSYDKANRSSGKSFRGLGMDEGLRILSEVKRQLGLHVLTDVHSEHEIEPVASVVDVLQTPAFLCRQTDFIHACARSGKPVNIKKGQFLAPHDMKNVIDKARDAAREAGLSEDRFMACERGVSFGYNNLVSDMRSLAIMRETGAPVVFDATHSVQLPGGQGTSSGGQREFVPVLARAAVATGIAGLFMETHPNPAEAKSDGPNAVPLHRMADLLETLMTLDQAVKRTPFLENDFN</sequence>
<evidence type="ECO:0000255" key="1">
    <source>
        <dbReference type="HAMAP-Rule" id="MF_00056"/>
    </source>
</evidence>
<keyword id="KW-0963">Cytoplasm</keyword>
<keyword id="KW-0448">Lipopolysaccharide biosynthesis</keyword>
<keyword id="KW-1185">Reference proteome</keyword>
<keyword id="KW-0808">Transferase</keyword>